<accession>Q73MV2</accession>
<evidence type="ECO:0000255" key="1">
    <source>
        <dbReference type="HAMAP-Rule" id="MF_00421"/>
    </source>
</evidence>
<reference key="1">
    <citation type="journal article" date="2004" name="Proc. Natl. Acad. Sci. U.S.A.">
        <title>Comparison of the genome of the oral pathogen Treponema denticola with other spirochete genomes.</title>
        <authorList>
            <person name="Seshadri R."/>
            <person name="Myers G.S.A."/>
            <person name="Tettelin H."/>
            <person name="Eisen J.A."/>
            <person name="Heidelberg J.F."/>
            <person name="Dodson R.J."/>
            <person name="Davidsen T.M."/>
            <person name="DeBoy R.T."/>
            <person name="Fouts D.E."/>
            <person name="Haft D.H."/>
            <person name="Selengut J."/>
            <person name="Ren Q."/>
            <person name="Brinkac L.M."/>
            <person name="Madupu R."/>
            <person name="Kolonay J.F."/>
            <person name="Durkin S.A."/>
            <person name="Daugherty S.C."/>
            <person name="Shetty J."/>
            <person name="Shvartsbeyn A."/>
            <person name="Gebregeorgis E."/>
            <person name="Geer K."/>
            <person name="Tsegaye G."/>
            <person name="Malek J.A."/>
            <person name="Ayodeji B."/>
            <person name="Shatsman S."/>
            <person name="McLeod M.P."/>
            <person name="Smajs D."/>
            <person name="Howell J.K."/>
            <person name="Pal S."/>
            <person name="Amin A."/>
            <person name="Vashisth P."/>
            <person name="McNeill T.Z."/>
            <person name="Xiang Q."/>
            <person name="Sodergren E."/>
            <person name="Baca E."/>
            <person name="Weinstock G.M."/>
            <person name="Norris S.J."/>
            <person name="Fraser C.M."/>
            <person name="Paulsen I.T."/>
        </authorList>
    </citation>
    <scope>NUCLEOTIDE SEQUENCE [LARGE SCALE GENOMIC DNA]</scope>
    <source>
        <strain>ATCC 35405 / DSM 14222 / CIP 103919 / JCM 8153 / KCTC 15104</strain>
    </source>
</reference>
<sequence>MKPRALVLHATGTNRDGDAARALELAGAEPEIVHINKLKAKEKNWKDYEILVIPGGFSYADALGAGKLFALDLSNYFFDEVSEFVAAGKPVIGICNGFQVLVKSGILPGKEKDGKVILDKDGYKNRQATLTYNKQGRFECRFTTMIPQKSNCIWTKDLKGNIHCPIAHGEGRFLTDSQKTLDDLFEKGQIALVYGGKDAEKSIPANGEYPFNPNGSLADIAGICNTKGNVLGLMPHPENNVVIRERDSEEEKERTKLCLDMWKAGVNYVL</sequence>
<dbReference type="EC" id="6.3.5.3" evidence="1"/>
<dbReference type="EC" id="3.5.1.2" evidence="1"/>
<dbReference type="EMBL" id="AE017226">
    <property type="protein sequence ID" value="AAS11922.1"/>
    <property type="molecule type" value="Genomic_DNA"/>
</dbReference>
<dbReference type="RefSeq" id="NP_972011.1">
    <property type="nucleotide sequence ID" value="NC_002967.9"/>
</dbReference>
<dbReference type="SMR" id="Q73MV2"/>
<dbReference type="STRING" id="243275.TDE_1405"/>
<dbReference type="PaxDb" id="243275-TDE_1405"/>
<dbReference type="KEGG" id="tde:TDE_1405"/>
<dbReference type="PATRIC" id="fig|243275.7.peg.1347"/>
<dbReference type="eggNOG" id="COG0047">
    <property type="taxonomic scope" value="Bacteria"/>
</dbReference>
<dbReference type="HOGENOM" id="CLU_001031_3_0_12"/>
<dbReference type="OrthoDB" id="9804441at2"/>
<dbReference type="UniPathway" id="UPA00074">
    <property type="reaction ID" value="UER00128"/>
</dbReference>
<dbReference type="Proteomes" id="UP000008212">
    <property type="component" value="Chromosome"/>
</dbReference>
<dbReference type="GO" id="GO:0005737">
    <property type="term" value="C:cytoplasm"/>
    <property type="evidence" value="ECO:0007669"/>
    <property type="project" value="UniProtKB-SubCell"/>
</dbReference>
<dbReference type="GO" id="GO:0005524">
    <property type="term" value="F:ATP binding"/>
    <property type="evidence" value="ECO:0007669"/>
    <property type="project" value="UniProtKB-KW"/>
</dbReference>
<dbReference type="GO" id="GO:0004359">
    <property type="term" value="F:glutaminase activity"/>
    <property type="evidence" value="ECO:0007669"/>
    <property type="project" value="UniProtKB-EC"/>
</dbReference>
<dbReference type="GO" id="GO:0004642">
    <property type="term" value="F:phosphoribosylformylglycinamidine synthase activity"/>
    <property type="evidence" value="ECO:0007669"/>
    <property type="project" value="UniProtKB-UniRule"/>
</dbReference>
<dbReference type="GO" id="GO:0006189">
    <property type="term" value="P:'de novo' IMP biosynthetic process"/>
    <property type="evidence" value="ECO:0007669"/>
    <property type="project" value="UniProtKB-UniRule"/>
</dbReference>
<dbReference type="CDD" id="cd01740">
    <property type="entry name" value="GATase1_FGAR_AT"/>
    <property type="match status" value="1"/>
</dbReference>
<dbReference type="Gene3D" id="3.40.50.880">
    <property type="match status" value="1"/>
</dbReference>
<dbReference type="HAMAP" id="MF_00421">
    <property type="entry name" value="PurQ"/>
    <property type="match status" value="1"/>
</dbReference>
<dbReference type="InterPro" id="IPR029062">
    <property type="entry name" value="Class_I_gatase-like"/>
</dbReference>
<dbReference type="InterPro" id="IPR010075">
    <property type="entry name" value="PRibForGlyAmidine_synth_PurQ"/>
</dbReference>
<dbReference type="NCBIfam" id="TIGR01737">
    <property type="entry name" value="FGAM_synth_I"/>
    <property type="match status" value="1"/>
</dbReference>
<dbReference type="PANTHER" id="PTHR10099">
    <property type="entry name" value="PHOSPHORIBOSYLFORMYLGLYCINAMIDINE SYNTHASE"/>
    <property type="match status" value="1"/>
</dbReference>
<dbReference type="PANTHER" id="PTHR10099:SF1">
    <property type="entry name" value="PHOSPHORIBOSYLFORMYLGLYCINAMIDINE SYNTHASE"/>
    <property type="match status" value="1"/>
</dbReference>
<dbReference type="Pfam" id="PF13507">
    <property type="entry name" value="GATase_5"/>
    <property type="match status" value="1"/>
</dbReference>
<dbReference type="PIRSF" id="PIRSF001586">
    <property type="entry name" value="FGAM_synth_I"/>
    <property type="match status" value="1"/>
</dbReference>
<dbReference type="SMART" id="SM01211">
    <property type="entry name" value="GATase_5"/>
    <property type="match status" value="1"/>
</dbReference>
<dbReference type="SUPFAM" id="SSF52317">
    <property type="entry name" value="Class I glutamine amidotransferase-like"/>
    <property type="match status" value="1"/>
</dbReference>
<dbReference type="PROSITE" id="PS51273">
    <property type="entry name" value="GATASE_TYPE_1"/>
    <property type="match status" value="1"/>
</dbReference>
<name>PURQ_TREDE</name>
<gene>
    <name evidence="1" type="primary">purQ</name>
    <name type="ordered locus">TDE_1405</name>
</gene>
<organism>
    <name type="scientific">Treponema denticola (strain ATCC 35405 / DSM 14222 / CIP 103919 / JCM 8153 / KCTC 15104)</name>
    <dbReference type="NCBI Taxonomy" id="243275"/>
    <lineage>
        <taxon>Bacteria</taxon>
        <taxon>Pseudomonadati</taxon>
        <taxon>Spirochaetota</taxon>
        <taxon>Spirochaetia</taxon>
        <taxon>Spirochaetales</taxon>
        <taxon>Treponemataceae</taxon>
        <taxon>Treponema</taxon>
    </lineage>
</organism>
<keyword id="KW-0067">ATP-binding</keyword>
<keyword id="KW-0963">Cytoplasm</keyword>
<keyword id="KW-0315">Glutamine amidotransferase</keyword>
<keyword id="KW-0378">Hydrolase</keyword>
<keyword id="KW-0436">Ligase</keyword>
<keyword id="KW-0547">Nucleotide-binding</keyword>
<keyword id="KW-0658">Purine biosynthesis</keyword>
<keyword id="KW-1185">Reference proteome</keyword>
<protein>
    <recommendedName>
        <fullName evidence="1">Phosphoribosylformylglycinamidine synthase subunit PurQ</fullName>
        <shortName evidence="1">FGAM synthase</shortName>
        <ecNumber evidence="1">6.3.5.3</ecNumber>
    </recommendedName>
    <alternativeName>
        <fullName evidence="1">Formylglycinamide ribonucleotide amidotransferase subunit I</fullName>
        <shortName evidence="1">FGAR amidotransferase I</shortName>
        <shortName evidence="1">FGAR-AT I</shortName>
    </alternativeName>
    <alternativeName>
        <fullName evidence="1">Glutaminase PurQ</fullName>
        <ecNumber evidence="1">3.5.1.2</ecNumber>
    </alternativeName>
    <alternativeName>
        <fullName evidence="1">Phosphoribosylformylglycinamidine synthase subunit I</fullName>
    </alternativeName>
</protein>
<comment type="function">
    <text evidence="1">Part of the phosphoribosylformylglycinamidine synthase complex involved in the purines biosynthetic pathway. Catalyzes the ATP-dependent conversion of formylglycinamide ribonucleotide (FGAR) and glutamine to yield formylglycinamidine ribonucleotide (FGAM) and glutamate. The FGAM synthase complex is composed of three subunits. PurQ produces an ammonia molecule by converting glutamine to glutamate. PurL transfers the ammonia molecule to FGAR to form FGAM in an ATP-dependent manner. PurS interacts with PurQ and PurL and is thought to assist in the transfer of the ammonia molecule from PurQ to PurL.</text>
</comment>
<comment type="catalytic activity">
    <reaction evidence="1">
        <text>N(2)-formyl-N(1)-(5-phospho-beta-D-ribosyl)glycinamide + L-glutamine + ATP + H2O = 2-formamido-N(1)-(5-O-phospho-beta-D-ribosyl)acetamidine + L-glutamate + ADP + phosphate + H(+)</text>
        <dbReference type="Rhea" id="RHEA:17129"/>
        <dbReference type="ChEBI" id="CHEBI:15377"/>
        <dbReference type="ChEBI" id="CHEBI:15378"/>
        <dbReference type="ChEBI" id="CHEBI:29985"/>
        <dbReference type="ChEBI" id="CHEBI:30616"/>
        <dbReference type="ChEBI" id="CHEBI:43474"/>
        <dbReference type="ChEBI" id="CHEBI:58359"/>
        <dbReference type="ChEBI" id="CHEBI:147286"/>
        <dbReference type="ChEBI" id="CHEBI:147287"/>
        <dbReference type="ChEBI" id="CHEBI:456216"/>
        <dbReference type="EC" id="6.3.5.3"/>
    </reaction>
</comment>
<comment type="catalytic activity">
    <reaction evidence="1">
        <text>L-glutamine + H2O = L-glutamate + NH4(+)</text>
        <dbReference type="Rhea" id="RHEA:15889"/>
        <dbReference type="ChEBI" id="CHEBI:15377"/>
        <dbReference type="ChEBI" id="CHEBI:28938"/>
        <dbReference type="ChEBI" id="CHEBI:29985"/>
        <dbReference type="ChEBI" id="CHEBI:58359"/>
        <dbReference type="EC" id="3.5.1.2"/>
    </reaction>
</comment>
<comment type="pathway">
    <text evidence="1">Purine metabolism; IMP biosynthesis via de novo pathway; 5-amino-1-(5-phospho-D-ribosyl)imidazole from N(2)-formyl-N(1)-(5-phospho-D-ribosyl)glycinamide: step 1/2.</text>
</comment>
<comment type="subunit">
    <text evidence="1">Part of the FGAM synthase complex composed of 1 PurL, 1 PurQ and 2 PurS subunits.</text>
</comment>
<comment type="subcellular location">
    <subcellularLocation>
        <location evidence="1">Cytoplasm</location>
    </subcellularLocation>
</comment>
<feature type="chain" id="PRO_0000100602" description="Phosphoribosylformylglycinamidine synthase subunit PurQ">
    <location>
        <begin position="1"/>
        <end position="270"/>
    </location>
</feature>
<feature type="domain" description="Glutamine amidotransferase type-1" evidence="1">
    <location>
        <begin position="5"/>
        <end position="251"/>
    </location>
</feature>
<feature type="active site" description="Nucleophile" evidence="1">
    <location>
        <position position="95"/>
    </location>
</feature>
<feature type="active site" evidence="1">
    <location>
        <position position="236"/>
    </location>
</feature>
<feature type="active site" evidence="1">
    <location>
        <position position="238"/>
    </location>
</feature>
<proteinExistence type="inferred from homology"/>